<comment type="function">
    <text evidence="1">Catalyzes the oxidation of 5,10-methylenetetrahydrofolate to 5,10-methenyltetrahydrofolate and then the hydrolysis of 5,10-methenyltetrahydrofolate to 10-formyltetrahydrofolate.</text>
</comment>
<comment type="catalytic activity">
    <reaction evidence="1">
        <text>(6R)-5,10-methylene-5,6,7,8-tetrahydrofolate + NADP(+) = (6R)-5,10-methenyltetrahydrofolate + NADPH</text>
        <dbReference type="Rhea" id="RHEA:22812"/>
        <dbReference type="ChEBI" id="CHEBI:15636"/>
        <dbReference type="ChEBI" id="CHEBI:57455"/>
        <dbReference type="ChEBI" id="CHEBI:57783"/>
        <dbReference type="ChEBI" id="CHEBI:58349"/>
        <dbReference type="EC" id="1.5.1.5"/>
    </reaction>
</comment>
<comment type="catalytic activity">
    <reaction evidence="1">
        <text>(6R)-5,10-methenyltetrahydrofolate + H2O = (6R)-10-formyltetrahydrofolate + H(+)</text>
        <dbReference type="Rhea" id="RHEA:23700"/>
        <dbReference type="ChEBI" id="CHEBI:15377"/>
        <dbReference type="ChEBI" id="CHEBI:15378"/>
        <dbReference type="ChEBI" id="CHEBI:57455"/>
        <dbReference type="ChEBI" id="CHEBI:195366"/>
        <dbReference type="EC" id="3.5.4.9"/>
    </reaction>
</comment>
<comment type="pathway">
    <text evidence="1">One-carbon metabolism; tetrahydrofolate interconversion.</text>
</comment>
<comment type="subunit">
    <text evidence="1">Homodimer.</text>
</comment>
<comment type="similarity">
    <text evidence="1">Belongs to the tetrahydrofolate dehydrogenase/cyclohydrolase family.</text>
</comment>
<feature type="chain" id="PRO_0000268496" description="Bifunctional protein FolD">
    <location>
        <begin position="1"/>
        <end position="284"/>
    </location>
</feature>
<feature type="binding site" evidence="1">
    <location>
        <begin position="166"/>
        <end position="168"/>
    </location>
    <ligand>
        <name>NADP(+)</name>
        <dbReference type="ChEBI" id="CHEBI:58349"/>
    </ligand>
</feature>
<feature type="binding site" evidence="1">
    <location>
        <position position="232"/>
    </location>
    <ligand>
        <name>NADP(+)</name>
        <dbReference type="ChEBI" id="CHEBI:58349"/>
    </ligand>
</feature>
<dbReference type="EC" id="1.5.1.5" evidence="1"/>
<dbReference type="EC" id="3.5.4.9" evidence="1"/>
<dbReference type="EMBL" id="CP000444">
    <property type="protein sequence ID" value="ABI43550.1"/>
    <property type="molecule type" value="Genomic_DNA"/>
</dbReference>
<dbReference type="SMR" id="Q0HTK5"/>
<dbReference type="KEGG" id="shm:Shewmr7_2565"/>
<dbReference type="HOGENOM" id="CLU_034045_2_1_6"/>
<dbReference type="UniPathway" id="UPA00193"/>
<dbReference type="GO" id="GO:0005829">
    <property type="term" value="C:cytosol"/>
    <property type="evidence" value="ECO:0007669"/>
    <property type="project" value="TreeGrafter"/>
</dbReference>
<dbReference type="GO" id="GO:0004477">
    <property type="term" value="F:methenyltetrahydrofolate cyclohydrolase activity"/>
    <property type="evidence" value="ECO:0007669"/>
    <property type="project" value="UniProtKB-UniRule"/>
</dbReference>
<dbReference type="GO" id="GO:0004488">
    <property type="term" value="F:methylenetetrahydrofolate dehydrogenase (NADP+) activity"/>
    <property type="evidence" value="ECO:0007669"/>
    <property type="project" value="UniProtKB-UniRule"/>
</dbReference>
<dbReference type="GO" id="GO:0000105">
    <property type="term" value="P:L-histidine biosynthetic process"/>
    <property type="evidence" value="ECO:0007669"/>
    <property type="project" value="UniProtKB-KW"/>
</dbReference>
<dbReference type="GO" id="GO:0009086">
    <property type="term" value="P:methionine biosynthetic process"/>
    <property type="evidence" value="ECO:0007669"/>
    <property type="project" value="UniProtKB-KW"/>
</dbReference>
<dbReference type="GO" id="GO:0006164">
    <property type="term" value="P:purine nucleotide biosynthetic process"/>
    <property type="evidence" value="ECO:0007669"/>
    <property type="project" value="UniProtKB-KW"/>
</dbReference>
<dbReference type="GO" id="GO:0035999">
    <property type="term" value="P:tetrahydrofolate interconversion"/>
    <property type="evidence" value="ECO:0007669"/>
    <property type="project" value="UniProtKB-UniRule"/>
</dbReference>
<dbReference type="CDD" id="cd01080">
    <property type="entry name" value="NAD_bind_m-THF_DH_Cyclohyd"/>
    <property type="match status" value="1"/>
</dbReference>
<dbReference type="FunFam" id="3.40.50.10860:FF:000001">
    <property type="entry name" value="Bifunctional protein FolD"/>
    <property type="match status" value="1"/>
</dbReference>
<dbReference type="FunFam" id="3.40.50.720:FF:000006">
    <property type="entry name" value="Bifunctional protein FolD"/>
    <property type="match status" value="1"/>
</dbReference>
<dbReference type="Gene3D" id="3.40.50.10860">
    <property type="entry name" value="Leucine Dehydrogenase, chain A, domain 1"/>
    <property type="match status" value="1"/>
</dbReference>
<dbReference type="Gene3D" id="3.40.50.720">
    <property type="entry name" value="NAD(P)-binding Rossmann-like Domain"/>
    <property type="match status" value="1"/>
</dbReference>
<dbReference type="HAMAP" id="MF_01576">
    <property type="entry name" value="THF_DHG_CYH"/>
    <property type="match status" value="1"/>
</dbReference>
<dbReference type="InterPro" id="IPR046346">
    <property type="entry name" value="Aminoacid_DH-like_N_sf"/>
</dbReference>
<dbReference type="InterPro" id="IPR036291">
    <property type="entry name" value="NAD(P)-bd_dom_sf"/>
</dbReference>
<dbReference type="InterPro" id="IPR000672">
    <property type="entry name" value="THF_DH/CycHdrlase"/>
</dbReference>
<dbReference type="InterPro" id="IPR020630">
    <property type="entry name" value="THF_DH/CycHdrlase_cat_dom"/>
</dbReference>
<dbReference type="InterPro" id="IPR020867">
    <property type="entry name" value="THF_DH/CycHdrlase_CS"/>
</dbReference>
<dbReference type="InterPro" id="IPR020631">
    <property type="entry name" value="THF_DH/CycHdrlase_NAD-bd_dom"/>
</dbReference>
<dbReference type="NCBIfam" id="NF008058">
    <property type="entry name" value="PRK10792.1"/>
    <property type="match status" value="1"/>
</dbReference>
<dbReference type="NCBIfam" id="NF010783">
    <property type="entry name" value="PRK14186.1"/>
    <property type="match status" value="1"/>
</dbReference>
<dbReference type="PANTHER" id="PTHR48099:SF5">
    <property type="entry name" value="C-1-TETRAHYDROFOLATE SYNTHASE, CYTOPLASMIC"/>
    <property type="match status" value="1"/>
</dbReference>
<dbReference type="PANTHER" id="PTHR48099">
    <property type="entry name" value="C-1-TETRAHYDROFOLATE SYNTHASE, CYTOPLASMIC-RELATED"/>
    <property type="match status" value="1"/>
</dbReference>
<dbReference type="Pfam" id="PF00763">
    <property type="entry name" value="THF_DHG_CYH"/>
    <property type="match status" value="1"/>
</dbReference>
<dbReference type="Pfam" id="PF02882">
    <property type="entry name" value="THF_DHG_CYH_C"/>
    <property type="match status" value="1"/>
</dbReference>
<dbReference type="PRINTS" id="PR00085">
    <property type="entry name" value="THFDHDRGNASE"/>
</dbReference>
<dbReference type="SUPFAM" id="SSF53223">
    <property type="entry name" value="Aminoacid dehydrogenase-like, N-terminal domain"/>
    <property type="match status" value="1"/>
</dbReference>
<dbReference type="SUPFAM" id="SSF51735">
    <property type="entry name" value="NAD(P)-binding Rossmann-fold domains"/>
    <property type="match status" value="1"/>
</dbReference>
<dbReference type="PROSITE" id="PS00767">
    <property type="entry name" value="THF_DHG_CYH_2"/>
    <property type="match status" value="1"/>
</dbReference>
<protein>
    <recommendedName>
        <fullName evidence="1">Bifunctional protein FolD</fullName>
    </recommendedName>
    <domain>
        <recommendedName>
            <fullName evidence="1">Methylenetetrahydrofolate dehydrogenase</fullName>
            <ecNumber evidence="1">1.5.1.5</ecNumber>
        </recommendedName>
    </domain>
    <domain>
        <recommendedName>
            <fullName evidence="1">Methenyltetrahydrofolate cyclohydrolase</fullName>
            <ecNumber evidence="1">3.5.4.9</ecNumber>
        </recommendedName>
    </domain>
</protein>
<keyword id="KW-0028">Amino-acid biosynthesis</keyword>
<keyword id="KW-0368">Histidine biosynthesis</keyword>
<keyword id="KW-0378">Hydrolase</keyword>
<keyword id="KW-0486">Methionine biosynthesis</keyword>
<keyword id="KW-0511">Multifunctional enzyme</keyword>
<keyword id="KW-0521">NADP</keyword>
<keyword id="KW-0554">One-carbon metabolism</keyword>
<keyword id="KW-0560">Oxidoreductase</keyword>
<keyword id="KW-0658">Purine biosynthesis</keyword>
<proteinExistence type="inferred from homology"/>
<accession>Q0HTK5</accession>
<organism>
    <name type="scientific">Shewanella sp. (strain MR-7)</name>
    <dbReference type="NCBI Taxonomy" id="60481"/>
    <lineage>
        <taxon>Bacteria</taxon>
        <taxon>Pseudomonadati</taxon>
        <taxon>Pseudomonadota</taxon>
        <taxon>Gammaproteobacteria</taxon>
        <taxon>Alteromonadales</taxon>
        <taxon>Shewanellaceae</taxon>
        <taxon>Shewanella</taxon>
    </lineage>
</organism>
<name>FOLD_SHESR</name>
<evidence type="ECO:0000255" key="1">
    <source>
        <dbReference type="HAMAP-Rule" id="MF_01576"/>
    </source>
</evidence>
<sequence>MTAQIIDGKAIAQSIRTQLREKVTARKEAGQRVPGLAVILVGADPASQVYVGSKRKACEEVGFISRSYDLDTSYTEEALLALIDELNDDPTIDGILVQLPLPAHIEDSKVIERIRPDKDVDGFHPYNVGRLAQRIPVLRSCTPMGIMTLIKSTGVDTYGLDAVVVGASNIVGRPMTLELLLAGCTTTTCHRFTKNLEQKIRQADLVVVAVGKPGFIPGEWIKPGAIVIDVGINRLENGTLVGDVQYEVAAQNASFITPVPGGVGPMTIASLLENTLYAAEQYHD</sequence>
<reference key="1">
    <citation type="submission" date="2006-08" db="EMBL/GenBank/DDBJ databases">
        <title>Complete sequence of chromosome 1 of Shewanella sp. MR-7.</title>
        <authorList>
            <person name="Copeland A."/>
            <person name="Lucas S."/>
            <person name="Lapidus A."/>
            <person name="Barry K."/>
            <person name="Detter J.C."/>
            <person name="Glavina del Rio T."/>
            <person name="Hammon N."/>
            <person name="Israni S."/>
            <person name="Dalin E."/>
            <person name="Tice H."/>
            <person name="Pitluck S."/>
            <person name="Kiss H."/>
            <person name="Brettin T."/>
            <person name="Bruce D."/>
            <person name="Han C."/>
            <person name="Tapia R."/>
            <person name="Gilna P."/>
            <person name="Schmutz J."/>
            <person name="Larimer F."/>
            <person name="Land M."/>
            <person name="Hauser L."/>
            <person name="Kyrpides N."/>
            <person name="Mikhailova N."/>
            <person name="Nealson K."/>
            <person name="Konstantinidis K."/>
            <person name="Klappenbach J."/>
            <person name="Tiedje J."/>
            <person name="Richardson P."/>
        </authorList>
    </citation>
    <scope>NUCLEOTIDE SEQUENCE [LARGE SCALE GENOMIC DNA]</scope>
    <source>
        <strain>MR-7</strain>
    </source>
</reference>
<gene>
    <name evidence="1" type="primary">folD</name>
    <name type="ordered locus">Shewmr7_2565</name>
</gene>